<proteinExistence type="inferred from homology"/>
<keyword id="KW-1185">Reference proteome</keyword>
<organism>
    <name type="scientific">Bos taurus</name>
    <name type="common">Bovine</name>
    <dbReference type="NCBI Taxonomy" id="9913"/>
    <lineage>
        <taxon>Eukaryota</taxon>
        <taxon>Metazoa</taxon>
        <taxon>Chordata</taxon>
        <taxon>Craniata</taxon>
        <taxon>Vertebrata</taxon>
        <taxon>Euteleostomi</taxon>
        <taxon>Mammalia</taxon>
        <taxon>Eutheria</taxon>
        <taxon>Laurasiatheria</taxon>
        <taxon>Artiodactyla</taxon>
        <taxon>Ruminantia</taxon>
        <taxon>Pecora</taxon>
        <taxon>Bovidae</taxon>
        <taxon>Bovinae</taxon>
        <taxon>Bos</taxon>
    </lineage>
</organism>
<reference key="1">
    <citation type="submission" date="2005-08" db="EMBL/GenBank/DDBJ databases">
        <authorList>
            <consortium name="NIH - Mammalian Gene Collection (MGC) project"/>
        </authorList>
    </citation>
    <scope>NUCLEOTIDE SEQUENCE [LARGE SCALE MRNA]</scope>
    <source>
        <strain>Hereford</strain>
        <tissue>Heart ventricle</tissue>
    </source>
</reference>
<feature type="chain" id="PRO_0000245772" description="NADH dehydrogenase [ubiquinone] 1 alpha subcomplex subunit 4-like 2">
    <location>
        <begin position="1"/>
        <end position="87"/>
    </location>
</feature>
<protein>
    <recommendedName>
        <fullName>NADH dehydrogenase [ubiquinone] 1 alpha subcomplex subunit 4-like 2</fullName>
    </recommendedName>
</protein>
<accession>Q3SZ44</accession>
<dbReference type="EMBL" id="BC103157">
    <property type="protein sequence ID" value="AAI03158.1"/>
    <property type="molecule type" value="mRNA"/>
</dbReference>
<dbReference type="RefSeq" id="NP_001106776.1">
    <property type="nucleotide sequence ID" value="NM_001113305.2"/>
</dbReference>
<dbReference type="SMR" id="Q3SZ44"/>
<dbReference type="FunCoup" id="Q3SZ44">
    <property type="interactions" value="91"/>
</dbReference>
<dbReference type="STRING" id="9913.ENSBTAP00000038062"/>
<dbReference type="PaxDb" id="9913-ENSBTAP00000038062"/>
<dbReference type="Ensembl" id="ENSBTAT00000038247.3">
    <property type="protein sequence ID" value="ENSBTAP00000038062.2"/>
    <property type="gene ID" value="ENSBTAG00000031503.2"/>
</dbReference>
<dbReference type="GeneID" id="613541"/>
<dbReference type="KEGG" id="bta:613541"/>
<dbReference type="CTD" id="56901"/>
<dbReference type="VEuPathDB" id="HostDB:ENSBTAG00000031503"/>
<dbReference type="VGNC" id="VGNC:31948">
    <property type="gene designation" value="NDUFA4L2"/>
</dbReference>
<dbReference type="eggNOG" id="ENOG502SG4Q">
    <property type="taxonomic scope" value="Eukaryota"/>
</dbReference>
<dbReference type="GeneTree" id="ENSGT00940000161040"/>
<dbReference type="HOGENOM" id="CLU_181002_0_0_1"/>
<dbReference type="InParanoid" id="Q3SZ44"/>
<dbReference type="OMA" id="MDYKKLK"/>
<dbReference type="OrthoDB" id="5511684at2759"/>
<dbReference type="TreeFam" id="TF106383"/>
<dbReference type="Proteomes" id="UP000009136">
    <property type="component" value="Chromosome 5"/>
</dbReference>
<dbReference type="Bgee" id="ENSBTAG00000031503">
    <property type="expression patterns" value="Expressed in aorta and 100 other cell types or tissues"/>
</dbReference>
<dbReference type="GO" id="GO:0045277">
    <property type="term" value="C:respiratory chain complex IV"/>
    <property type="evidence" value="ECO:0000318"/>
    <property type="project" value="GO_Central"/>
</dbReference>
<dbReference type="InterPro" id="IPR010530">
    <property type="entry name" value="B12D"/>
</dbReference>
<dbReference type="PANTHER" id="PTHR14256:SF5">
    <property type="entry name" value="NADH DEHYDROGENASE [UBIQUINONE] 1 ALPHA SUBCOMPLEX SUBUNIT 4-LIKE 2"/>
    <property type="match status" value="1"/>
</dbReference>
<dbReference type="PANTHER" id="PTHR14256">
    <property type="entry name" value="NADH-UBIQUINONE OXIDOREDUCTASE MLRQ SUBUNIT"/>
    <property type="match status" value="1"/>
</dbReference>
<dbReference type="Pfam" id="PF06522">
    <property type="entry name" value="B12D"/>
    <property type="match status" value="1"/>
</dbReference>
<gene>
    <name type="primary">NDUFA4L2</name>
</gene>
<sequence length="87" mass="9984">MAGTSLGARFYRQIKRHPGLIPMIGFIGLGMGSAALYLLRLALRSPDVCWDRKNNPEPWNRLSPNDQYKFLAVSTDYKKLKKDRPDF</sequence>
<comment type="similarity">
    <text evidence="1">Belongs to the complex I NDUFA4 subunit family.</text>
</comment>
<name>NUA4L_BOVIN</name>
<evidence type="ECO:0000305" key="1"/>